<keyword id="KW-0175">Coiled coil</keyword>
<keyword id="KW-0963">Cytoplasm</keyword>
<keyword id="KW-0396">Initiation factor</keyword>
<keyword id="KW-0648">Protein biosynthesis</keyword>
<keyword id="KW-1185">Reference proteome</keyword>
<organism>
    <name type="scientific">Aspergillus fumigatus (strain ATCC MYA-4609 / CBS 101355 / FGSC A1100 / Af293)</name>
    <name type="common">Neosartorya fumigata</name>
    <dbReference type="NCBI Taxonomy" id="330879"/>
    <lineage>
        <taxon>Eukaryota</taxon>
        <taxon>Fungi</taxon>
        <taxon>Dikarya</taxon>
        <taxon>Ascomycota</taxon>
        <taxon>Pezizomycotina</taxon>
        <taxon>Eurotiomycetes</taxon>
        <taxon>Eurotiomycetidae</taxon>
        <taxon>Eurotiales</taxon>
        <taxon>Aspergillaceae</taxon>
        <taxon>Aspergillus</taxon>
        <taxon>Aspergillus subgen. Fumigati</taxon>
    </lineage>
</organism>
<protein>
    <recommendedName>
        <fullName evidence="1">Eukaryotic translation initiation factor 3 subunit J</fullName>
        <shortName evidence="1">eIF3j</shortName>
    </recommendedName>
    <alternativeName>
        <fullName>Eukaryotic translation initiation factor 3 30 kDa subunit</fullName>
        <shortName>eIF-3 30 kDa</shortName>
    </alternativeName>
</protein>
<sequence length="267" mass="29793">MAPSKWDDEEDSSPPPPPPVVARRKFDDEEEEDVLDSWDAAEDSEVEREKAAKAAAAAAKAEAEAAAKKKSKAQRIEERKQERKKLAEANESDEDSEEDEAARRARLRRTEKEGDLKHAQDLFEDIDLNRNRGTPKAIVISDSADPTQAVDLSAMPLFKPTTKDQFTRLTSTLIPLLTAHSKKPHYALWAQEFTKQLVKELNSGDVKKIASALTTISNEKMREERAADKGNKKTKAAKTKVSLVASRDNKIDATPYDDDGLDDDDFM</sequence>
<feature type="chain" id="PRO_0000365147" description="Eukaryotic translation initiation factor 3 subunit J">
    <location>
        <begin position="1"/>
        <end position="267"/>
    </location>
</feature>
<feature type="region of interest" description="Disordered" evidence="2">
    <location>
        <begin position="1"/>
        <end position="118"/>
    </location>
</feature>
<feature type="region of interest" description="Disordered" evidence="2">
    <location>
        <begin position="221"/>
        <end position="241"/>
    </location>
</feature>
<feature type="coiled-coil region" evidence="1">
    <location>
        <begin position="44"/>
        <end position="99"/>
    </location>
</feature>
<feature type="compositionally biased region" description="Acidic residues" evidence="2">
    <location>
        <begin position="28"/>
        <end position="46"/>
    </location>
</feature>
<feature type="compositionally biased region" description="Basic and acidic residues" evidence="2">
    <location>
        <begin position="74"/>
        <end position="88"/>
    </location>
</feature>
<feature type="compositionally biased region" description="Acidic residues" evidence="2">
    <location>
        <begin position="90"/>
        <end position="100"/>
    </location>
</feature>
<feature type="compositionally biased region" description="Basic and acidic residues" evidence="2">
    <location>
        <begin position="108"/>
        <end position="118"/>
    </location>
</feature>
<feature type="compositionally biased region" description="Basic and acidic residues" evidence="2">
    <location>
        <begin position="221"/>
        <end position="231"/>
    </location>
</feature>
<accession>Q4WND3</accession>
<proteinExistence type="inferred from homology"/>
<dbReference type="EMBL" id="AAHF01000006">
    <property type="protein sequence ID" value="EAL88531.1"/>
    <property type="molecule type" value="Genomic_DNA"/>
</dbReference>
<dbReference type="RefSeq" id="XP_750569.1">
    <property type="nucleotide sequence ID" value="XM_745476.1"/>
</dbReference>
<dbReference type="SMR" id="Q4WND3"/>
<dbReference type="FunCoup" id="Q4WND3">
    <property type="interactions" value="105"/>
</dbReference>
<dbReference type="STRING" id="330879.Q4WND3"/>
<dbReference type="EnsemblFungi" id="EAL88531">
    <property type="protein sequence ID" value="EAL88531"/>
    <property type="gene ID" value="AFUA_6G06760"/>
</dbReference>
<dbReference type="GeneID" id="3508746"/>
<dbReference type="KEGG" id="afm:AFUA_6G06760"/>
<dbReference type="VEuPathDB" id="FungiDB:Afu6g06760"/>
<dbReference type="eggNOG" id="KOG4813">
    <property type="taxonomic scope" value="Eukaryota"/>
</dbReference>
<dbReference type="HOGENOM" id="CLU_087988_0_0_1"/>
<dbReference type="InParanoid" id="Q4WND3"/>
<dbReference type="OMA" id="KPHYALW"/>
<dbReference type="OrthoDB" id="20381at2759"/>
<dbReference type="Proteomes" id="UP000002530">
    <property type="component" value="Chromosome 6"/>
</dbReference>
<dbReference type="GO" id="GO:0016282">
    <property type="term" value="C:eukaryotic 43S preinitiation complex"/>
    <property type="evidence" value="ECO:0007669"/>
    <property type="project" value="UniProtKB-UniRule"/>
</dbReference>
<dbReference type="GO" id="GO:0033290">
    <property type="term" value="C:eukaryotic 48S preinitiation complex"/>
    <property type="evidence" value="ECO:0007669"/>
    <property type="project" value="UniProtKB-UniRule"/>
</dbReference>
<dbReference type="GO" id="GO:0005852">
    <property type="term" value="C:eukaryotic translation initiation factor 3 complex"/>
    <property type="evidence" value="ECO:0000318"/>
    <property type="project" value="GO_Central"/>
</dbReference>
<dbReference type="GO" id="GO:0003743">
    <property type="term" value="F:translation initiation factor activity"/>
    <property type="evidence" value="ECO:0007669"/>
    <property type="project" value="UniProtKB-UniRule"/>
</dbReference>
<dbReference type="GO" id="GO:0001732">
    <property type="term" value="P:formation of cytoplasmic translation initiation complex"/>
    <property type="evidence" value="ECO:0007669"/>
    <property type="project" value="UniProtKB-UniRule"/>
</dbReference>
<dbReference type="FunFam" id="1.10.246.60:FF:000003">
    <property type="entry name" value="Eukaryotic translation initiation factor 3 subunit J"/>
    <property type="match status" value="1"/>
</dbReference>
<dbReference type="Gene3D" id="1.10.246.60">
    <property type="entry name" value="Eukaryotic translation initiation factor 3 like domains"/>
    <property type="match status" value="1"/>
</dbReference>
<dbReference type="HAMAP" id="MF_03009">
    <property type="entry name" value="eIF3j"/>
    <property type="match status" value="1"/>
</dbReference>
<dbReference type="InterPro" id="IPR023194">
    <property type="entry name" value="eIF3-like_dom_sf"/>
</dbReference>
<dbReference type="InterPro" id="IPR013906">
    <property type="entry name" value="eIF3j"/>
</dbReference>
<dbReference type="PANTHER" id="PTHR21681">
    <property type="entry name" value="EUKARYOTIC TRANSLATION INITIATION FACTOR 3 SUBUNIT J"/>
    <property type="match status" value="1"/>
</dbReference>
<dbReference type="PANTHER" id="PTHR21681:SF0">
    <property type="entry name" value="EUKARYOTIC TRANSLATION INITIATION FACTOR 3 SUBUNIT J"/>
    <property type="match status" value="1"/>
</dbReference>
<dbReference type="Pfam" id="PF08597">
    <property type="entry name" value="eIF3_subunit"/>
    <property type="match status" value="1"/>
</dbReference>
<gene>
    <name type="primary">hcr1</name>
    <name type="ORF">AFUA_6G06760</name>
</gene>
<evidence type="ECO:0000255" key="1">
    <source>
        <dbReference type="HAMAP-Rule" id="MF_03009"/>
    </source>
</evidence>
<evidence type="ECO:0000256" key="2">
    <source>
        <dbReference type="SAM" id="MobiDB-lite"/>
    </source>
</evidence>
<reference key="1">
    <citation type="journal article" date="2005" name="Nature">
        <title>Genomic sequence of the pathogenic and allergenic filamentous fungus Aspergillus fumigatus.</title>
        <authorList>
            <person name="Nierman W.C."/>
            <person name="Pain A."/>
            <person name="Anderson M.J."/>
            <person name="Wortman J.R."/>
            <person name="Kim H.S."/>
            <person name="Arroyo J."/>
            <person name="Berriman M."/>
            <person name="Abe K."/>
            <person name="Archer D.B."/>
            <person name="Bermejo C."/>
            <person name="Bennett J.W."/>
            <person name="Bowyer P."/>
            <person name="Chen D."/>
            <person name="Collins M."/>
            <person name="Coulsen R."/>
            <person name="Davies R."/>
            <person name="Dyer P.S."/>
            <person name="Farman M.L."/>
            <person name="Fedorova N."/>
            <person name="Fedorova N.D."/>
            <person name="Feldblyum T.V."/>
            <person name="Fischer R."/>
            <person name="Fosker N."/>
            <person name="Fraser A."/>
            <person name="Garcia J.L."/>
            <person name="Garcia M.J."/>
            <person name="Goble A."/>
            <person name="Goldman G.H."/>
            <person name="Gomi K."/>
            <person name="Griffith-Jones S."/>
            <person name="Gwilliam R."/>
            <person name="Haas B.J."/>
            <person name="Haas H."/>
            <person name="Harris D.E."/>
            <person name="Horiuchi H."/>
            <person name="Huang J."/>
            <person name="Humphray S."/>
            <person name="Jimenez J."/>
            <person name="Keller N."/>
            <person name="Khouri H."/>
            <person name="Kitamoto K."/>
            <person name="Kobayashi T."/>
            <person name="Konzack S."/>
            <person name="Kulkarni R."/>
            <person name="Kumagai T."/>
            <person name="Lafton A."/>
            <person name="Latge J.-P."/>
            <person name="Li W."/>
            <person name="Lord A."/>
            <person name="Lu C."/>
            <person name="Majoros W.H."/>
            <person name="May G.S."/>
            <person name="Miller B.L."/>
            <person name="Mohamoud Y."/>
            <person name="Molina M."/>
            <person name="Monod M."/>
            <person name="Mouyna I."/>
            <person name="Mulligan S."/>
            <person name="Murphy L.D."/>
            <person name="O'Neil S."/>
            <person name="Paulsen I."/>
            <person name="Penalva M.A."/>
            <person name="Pertea M."/>
            <person name="Price C."/>
            <person name="Pritchard B.L."/>
            <person name="Quail M.A."/>
            <person name="Rabbinowitsch E."/>
            <person name="Rawlins N."/>
            <person name="Rajandream M.A."/>
            <person name="Reichard U."/>
            <person name="Renauld H."/>
            <person name="Robson G.D."/>
            <person name="Rodriguez de Cordoba S."/>
            <person name="Rodriguez-Pena J.M."/>
            <person name="Ronning C.M."/>
            <person name="Rutter S."/>
            <person name="Salzberg S.L."/>
            <person name="Sanchez M."/>
            <person name="Sanchez-Ferrero J.C."/>
            <person name="Saunders D."/>
            <person name="Seeger K."/>
            <person name="Squares R."/>
            <person name="Squares S."/>
            <person name="Takeuchi M."/>
            <person name="Tekaia F."/>
            <person name="Turner G."/>
            <person name="Vazquez de Aldana C.R."/>
            <person name="Weidman J."/>
            <person name="White O."/>
            <person name="Woodward J.R."/>
            <person name="Yu J.-H."/>
            <person name="Fraser C.M."/>
            <person name="Galagan J.E."/>
            <person name="Asai K."/>
            <person name="Machida M."/>
            <person name="Hall N."/>
            <person name="Barrell B.G."/>
            <person name="Denning D.W."/>
        </authorList>
    </citation>
    <scope>NUCLEOTIDE SEQUENCE [LARGE SCALE GENOMIC DNA]</scope>
    <source>
        <strain>ATCC MYA-4609 / CBS 101355 / FGSC A1100 / Af293</strain>
    </source>
</reference>
<name>EIF3J_ASPFU</name>
<comment type="function">
    <text evidence="1">Component of the eukaryotic translation initiation factor 3 (eIF-3) complex, which is involved in protein synthesis of a specialized repertoire of mRNAs and, together with other initiation factors, stimulates binding of mRNA and methionyl-tRNAi to the 40S ribosome. The eIF-3 complex specifically targets and initiates translation of a subset of mRNAs involved in cell proliferation.</text>
</comment>
<comment type="subunit">
    <text evidence="1">Component of the eukaryotic translation initiation factor 3 (eIF-3) complex.</text>
</comment>
<comment type="subcellular location">
    <subcellularLocation>
        <location evidence="1">Cytoplasm</location>
    </subcellularLocation>
</comment>
<comment type="similarity">
    <text evidence="1">Belongs to the eIF-3 subunit J family.</text>
</comment>